<sequence length="2111" mass="232678">MFNFPHPAIDLASRMKSSPLMAGGSSSASSEDLFSPPMMEDLDTPMTEYPMGSPPRMPYRGEDIEIAFLRSEASIKKSSLFNDKFAATLDDLSARPIDSASLIGKLQSMTRSVREILDSGDQLVHEDGPQEILKQFVRVVNKHLCQDEDIHTVLAPLALEPEEKFHIIQTYYQAISMTQFVSPKWTSSLLSDALCRRANIVTVFNGQGVEGYFSELQHLYDTYGGLLAEPLYALSKQLKGLASDVRAQDMYPHGLDVIGWLENPEARPSTDYLLSAPVSQPLIGLVQLLNYAITCKILNKSPGEFARHLSGSAGHSQGIVVAAMLATVVSWPTFFDAASTALQVLFWIGCRSQQCYPSHSIPPSLVDQSERLSPMLSVKGASRESLLKYLDEHNRHLPPAQQGSLALINGRQQFVVAGNPLSLYAFANKLRAASNNSSTTNTARVPFSQRPLLITARFLPISVPFHTSLLEDAEAQILEDLRSVHVPGNSLLFPVLRTDNGADLREFDNLVPELVHMVVCGVVDWDRATRFPTATHLLDFGPGRETGIGALLASTKAGTAARVILSTTLTGPSKKTLGYMPELLSRRRPVVYNTSWEQDFAPRLVRVGDDILLDTKFSRALGLPPVMVAGMTPTTVSPDFVAEVINANYHIEIAGGGYHDAAGMRSALTRLVNLIPAGRGITVNLIYANPRAMGWQIPLLVQLRQEGLPITGLTIGAGVPSPDIASEYIRDLGLSHISFKPGSKEAIDNVLRIAESNPGFPIILQWTGGRAGGHHSYEDFHEPILDRYAQIRAYPNLILVAGSGFGGSDDTIPYITGSWSKKLGYAAMPFDGVLVGSRVMTAKEARTSPAVKQAIVDTPGVPDSQWEGTYKKATGGIITVKSEMGEPIHKLATRGVLLWAELDKEVFSLPAAQQVQELQRRKGSLMKRLNADFQKVWFGIDQQGNPVEISEMTYAEVLTRAVDLLYLKDQQAWIDPSYRSFVADFIRCVENRLSARQPRPRAVFQSALQLDRPQVFLSEFLQAYPAALEDVIVREDEDQLVKLYKQPGRKPLPFIVALDESFEYWFKKDSLWQSERLEAVTNQDVGRICILHGPVAAQYTKVANEPVKQILDNIHKPHVQAILKQQYAGDTSRVPTLDYLYSAGAVSPMLSPQDELLLPHVKHSRSYDPPTLAYDLEGPEENLPTEKQWLALIGGTKPSWRKALLTLNEIVQGKMLVENPIKGLFAPRAGLSVRIIQAGRPQKTVILMRQKSSQGQEKDEATVEIRALSTSEIMLTLRAPMTGGSAGNPPVDLVLYFTYKPTYGNNPIHEVMGTRNQRISRFYEQLWVGNAGDEGTSLQKSADDVQVLTREAILNFTKAIDNRNSAYNGKKNSKLLAPLDMAIVVAWKPLMRCLFTDAVNGDILKLLHLKNDFRVIDNASPMREGDVLSSTAAIESIRIRPDSGKVVRAVATIFKKGTPIITVASEFILQGRYEDYHNTFETKEEQVYKLPLKSKRDVVLLASKPWFRIAAADLSLDDHLDDELTFRLKSSYHFRDANTYSQIETCGTVSCAVGNKDMTIGTVMFKSNSHFLKNPVIDFLTRRGFAYDEVKQLPNAVPLAADVRIEMPTSSDQYAAASGDSNPIHLSRAFARYAGHNEGRVIHGMQTSGLVRGVVELHAAGNDPRRMKAWSASFKGKVSPGETLLVDISHTGMNNGRLIVVATARSESSSVEVFRATAEVAQKPGAYLFTGQGSQKPAMGMDLYETSQAARDVWHTAEQFFVNTYGISILEIVRNNPKEYTVHFGGSRGKAIRENYISLDFEVVNEQGEIESVRAFQEITPSSRSFTYTSSGGLLHETIFTQPALVVMELARFHDMRARGLINEDSCYAGHSLGEYAALAAMGEVFTVEGVTAAVFYRGLTMQKSIELDRSGRDYSMVAANPSRVSKNLSESDLCAIVDSIEAATGGLCEIVNFNVESTQYVCAGDLRSLDCLAGVLDSLVAHPEHLTSLETLNASVPAIVASCLAQTDKKPTPLVLQRGKATIPLKVNVPFHSSLLRPGADTFRRALRKAIPEHMVRPEKLIGRYIPNLTAMPFELSKGYFENVLAISESPFVREILERWDDNNVAVAVC</sequence>
<dbReference type="EC" id="2.3.1.86" evidence="9"/>
<dbReference type="EC" id="4.2.1.59" evidence="2"/>
<dbReference type="EC" id="1.3.1.9" evidence="2"/>
<dbReference type="EC" id="2.3.1.38" evidence="2"/>
<dbReference type="EC" id="2.3.1.39" evidence="2"/>
<dbReference type="EC" id="3.1.2.14" evidence="2"/>
<dbReference type="EMBL" id="BN001302">
    <property type="protein sequence ID" value="CBF73431.1"/>
    <property type="molecule type" value="Genomic_DNA"/>
</dbReference>
<dbReference type="EMBL" id="AACD01000135">
    <property type="protein sequence ID" value="EAA59527.1"/>
    <property type="molecule type" value="Genomic_DNA"/>
</dbReference>
<dbReference type="RefSeq" id="XP_681142.1">
    <property type="nucleotide sequence ID" value="XM_676050.1"/>
</dbReference>
<dbReference type="SMR" id="Q5AV07"/>
<dbReference type="STRING" id="227321.Q5AV07"/>
<dbReference type="EnsemblFungi" id="CBF73431">
    <property type="protein sequence ID" value="CBF73431"/>
    <property type="gene ID" value="ANIA_07873"/>
</dbReference>
<dbReference type="GeneID" id="2868965"/>
<dbReference type="KEGG" id="ani:ANIA_07873"/>
<dbReference type="VEuPathDB" id="FungiDB:AN7873"/>
<dbReference type="eggNOG" id="ENOG502QQJX">
    <property type="taxonomic scope" value="Eukaryota"/>
</dbReference>
<dbReference type="HOGENOM" id="CLU_000114_5_0_1"/>
<dbReference type="InParanoid" id="Q5AV07"/>
<dbReference type="OMA" id="RVTHGMF"/>
<dbReference type="OrthoDB" id="4251012at2759"/>
<dbReference type="Proteomes" id="UP000000560">
    <property type="component" value="Chromosome II"/>
</dbReference>
<dbReference type="GO" id="GO:0005835">
    <property type="term" value="C:fatty acid synthase complex"/>
    <property type="evidence" value="ECO:0000318"/>
    <property type="project" value="GO_Central"/>
</dbReference>
<dbReference type="GO" id="GO:0019171">
    <property type="term" value="F:(3R)-hydroxyacyl-[acyl-carrier-protein] dehydratase activity"/>
    <property type="evidence" value="ECO:0007669"/>
    <property type="project" value="UniProtKB-EC"/>
</dbReference>
<dbReference type="GO" id="GO:0004313">
    <property type="term" value="F:[acyl-carrier-protein] S-acetyltransferase activity"/>
    <property type="evidence" value="ECO:0007669"/>
    <property type="project" value="UniProtKB-EC"/>
</dbReference>
<dbReference type="GO" id="GO:0004314">
    <property type="term" value="F:[acyl-carrier-protein] S-malonyltransferase activity"/>
    <property type="evidence" value="ECO:0007669"/>
    <property type="project" value="UniProtKB-EC"/>
</dbReference>
<dbReference type="GO" id="GO:0004318">
    <property type="term" value="F:enoyl-[acyl-carrier-protein] reductase (NADH) activity"/>
    <property type="evidence" value="ECO:0007669"/>
    <property type="project" value="UniProtKB-EC"/>
</dbReference>
<dbReference type="GO" id="GO:0004312">
    <property type="term" value="F:fatty acid synthase activity"/>
    <property type="evidence" value="ECO:0007669"/>
    <property type="project" value="InterPro"/>
</dbReference>
<dbReference type="GO" id="GO:0016297">
    <property type="term" value="F:fatty acyl-[ACP] hydrolase activity"/>
    <property type="evidence" value="ECO:0007669"/>
    <property type="project" value="UniProtKB-EC"/>
</dbReference>
<dbReference type="GO" id="GO:0004321">
    <property type="term" value="F:fatty-acyl-CoA synthase activity"/>
    <property type="evidence" value="ECO:0007669"/>
    <property type="project" value="UniProtKB-EC"/>
</dbReference>
<dbReference type="GO" id="GO:0042759">
    <property type="term" value="P:long-chain fatty acid biosynthetic process"/>
    <property type="evidence" value="ECO:0000318"/>
    <property type="project" value="GO_Central"/>
</dbReference>
<dbReference type="CDD" id="cd03447">
    <property type="entry name" value="FAS_MaoC"/>
    <property type="match status" value="1"/>
</dbReference>
<dbReference type="FunFam" id="1.20.930.70:FF:000001">
    <property type="entry name" value="Fatty acid synthase beta subunit dehydratase"/>
    <property type="match status" value="1"/>
</dbReference>
<dbReference type="FunFam" id="3.20.20.70:FF:000078">
    <property type="entry name" value="Fatty acid synthase beta subunit dehydratase"/>
    <property type="match status" value="1"/>
</dbReference>
<dbReference type="FunFam" id="3.30.1120.100:FF:000001">
    <property type="entry name" value="Fatty acid synthase beta subunit dehydratase"/>
    <property type="match status" value="1"/>
</dbReference>
<dbReference type="FunFam" id="3.40.366.10:FF:000006">
    <property type="entry name" value="Fatty acid synthase beta subunit dehydratase"/>
    <property type="match status" value="1"/>
</dbReference>
<dbReference type="FunFam" id="3.30.70.3330:FF:000001">
    <property type="entry name" value="Fatty acid synthase subunit beta dehydratase"/>
    <property type="match status" value="1"/>
</dbReference>
<dbReference type="Gene3D" id="1.20.1050.120">
    <property type="match status" value="1"/>
</dbReference>
<dbReference type="Gene3D" id="1.20.930.70">
    <property type="match status" value="1"/>
</dbReference>
<dbReference type="Gene3D" id="3.30.1120.100">
    <property type="match status" value="1"/>
</dbReference>
<dbReference type="Gene3D" id="3.30.70.3330">
    <property type="match status" value="1"/>
</dbReference>
<dbReference type="Gene3D" id="6.10.140.1400">
    <property type="match status" value="1"/>
</dbReference>
<dbReference type="Gene3D" id="6.10.60.10">
    <property type="match status" value="1"/>
</dbReference>
<dbReference type="Gene3D" id="3.20.20.70">
    <property type="entry name" value="Aldolase class I"/>
    <property type="match status" value="2"/>
</dbReference>
<dbReference type="Gene3D" id="3.10.129.10">
    <property type="entry name" value="Hotdog Thioesterase"/>
    <property type="match status" value="1"/>
</dbReference>
<dbReference type="Gene3D" id="3.40.366.10">
    <property type="entry name" value="Malonyl-Coenzyme A Acyl Carrier Protein, domain 2"/>
    <property type="match status" value="3"/>
</dbReference>
<dbReference type="InterPro" id="IPR001227">
    <property type="entry name" value="Ac_transferase_dom_sf"/>
</dbReference>
<dbReference type="InterPro" id="IPR014043">
    <property type="entry name" value="Acyl_transferase_dom"/>
</dbReference>
<dbReference type="InterPro" id="IPR016035">
    <property type="entry name" value="Acyl_Trfase/lysoPLipase"/>
</dbReference>
<dbReference type="InterPro" id="IPR013785">
    <property type="entry name" value="Aldolase_TIM"/>
</dbReference>
<dbReference type="InterPro" id="IPR039569">
    <property type="entry name" value="FAS1-like_DH_region"/>
</dbReference>
<dbReference type="InterPro" id="IPR016452">
    <property type="entry name" value="Fas1/AflB-like"/>
</dbReference>
<dbReference type="InterPro" id="IPR013565">
    <property type="entry name" value="Fas1/AflB-like_central"/>
</dbReference>
<dbReference type="InterPro" id="IPR040883">
    <property type="entry name" value="FAS_meander"/>
</dbReference>
<dbReference type="InterPro" id="IPR003965">
    <property type="entry name" value="Fatty_acid_synthase"/>
</dbReference>
<dbReference type="InterPro" id="IPR050830">
    <property type="entry name" value="Fungal_FAS"/>
</dbReference>
<dbReference type="InterPro" id="IPR029069">
    <property type="entry name" value="HotDog_dom_sf"/>
</dbReference>
<dbReference type="InterPro" id="IPR002539">
    <property type="entry name" value="MaoC-like_dom"/>
</dbReference>
<dbReference type="InterPro" id="IPR032088">
    <property type="entry name" value="SAT"/>
</dbReference>
<dbReference type="PANTHER" id="PTHR10982:SF21">
    <property type="entry name" value="FATTY ACID SYNTHASE SUBUNIT BETA"/>
    <property type="match status" value="1"/>
</dbReference>
<dbReference type="PANTHER" id="PTHR10982">
    <property type="entry name" value="MALONYL COA-ACYL CARRIER PROTEIN TRANSACYLASE"/>
    <property type="match status" value="1"/>
</dbReference>
<dbReference type="Pfam" id="PF00698">
    <property type="entry name" value="Acyl_transf_1"/>
    <property type="match status" value="1"/>
</dbReference>
<dbReference type="Pfam" id="PF08354">
    <property type="entry name" value="Fas1-AflB-like_hel"/>
    <property type="match status" value="1"/>
</dbReference>
<dbReference type="Pfam" id="PF13452">
    <property type="entry name" value="FAS1_DH_region"/>
    <property type="match status" value="1"/>
</dbReference>
<dbReference type="Pfam" id="PF22235">
    <property type="entry name" value="FAS1_thioest_ins"/>
    <property type="match status" value="1"/>
</dbReference>
<dbReference type="Pfam" id="PF17951">
    <property type="entry name" value="FAS_meander"/>
    <property type="match status" value="1"/>
</dbReference>
<dbReference type="Pfam" id="PF01575">
    <property type="entry name" value="MaoC_dehydratas"/>
    <property type="match status" value="1"/>
</dbReference>
<dbReference type="Pfam" id="PF16073">
    <property type="entry name" value="SAT"/>
    <property type="match status" value="1"/>
</dbReference>
<dbReference type="PIRSF" id="PIRSF005562">
    <property type="entry name" value="FAS_yeast_beta"/>
    <property type="match status" value="1"/>
</dbReference>
<dbReference type="PRINTS" id="PR01483">
    <property type="entry name" value="FASYNTHASE"/>
</dbReference>
<dbReference type="SMART" id="SM00827">
    <property type="entry name" value="PKS_AT"/>
    <property type="match status" value="1"/>
</dbReference>
<dbReference type="SUPFAM" id="SSF52151">
    <property type="entry name" value="FabD/lysophospholipase-like"/>
    <property type="match status" value="2"/>
</dbReference>
<dbReference type="SUPFAM" id="SSF54637">
    <property type="entry name" value="Thioesterase/thiol ester dehydrase-isomerase"/>
    <property type="match status" value="2"/>
</dbReference>
<proteinExistence type="evidence at transcript level"/>
<reference key="1">
    <citation type="journal article" date="2005" name="Nature">
        <title>Sequencing of Aspergillus nidulans and comparative analysis with A. fumigatus and A. oryzae.</title>
        <authorList>
            <person name="Galagan J.E."/>
            <person name="Calvo S.E."/>
            <person name="Cuomo C."/>
            <person name="Ma L.-J."/>
            <person name="Wortman J.R."/>
            <person name="Batzoglou S."/>
            <person name="Lee S.-I."/>
            <person name="Bastuerkmen M."/>
            <person name="Spevak C.C."/>
            <person name="Clutterbuck J."/>
            <person name="Kapitonov V."/>
            <person name="Jurka J."/>
            <person name="Scazzocchio C."/>
            <person name="Farman M.L."/>
            <person name="Butler J."/>
            <person name="Purcell S."/>
            <person name="Harris S."/>
            <person name="Braus G.H."/>
            <person name="Draht O."/>
            <person name="Busch S."/>
            <person name="D'Enfert C."/>
            <person name="Bouchier C."/>
            <person name="Goldman G.H."/>
            <person name="Bell-Pedersen D."/>
            <person name="Griffiths-Jones S."/>
            <person name="Doonan J.H."/>
            <person name="Yu J."/>
            <person name="Vienken K."/>
            <person name="Pain A."/>
            <person name="Freitag M."/>
            <person name="Selker E.U."/>
            <person name="Archer D.B."/>
            <person name="Penalva M.A."/>
            <person name="Oakley B.R."/>
            <person name="Momany M."/>
            <person name="Tanaka T."/>
            <person name="Kumagai T."/>
            <person name="Asai K."/>
            <person name="Machida M."/>
            <person name="Nierman W.C."/>
            <person name="Denning D.W."/>
            <person name="Caddick M.X."/>
            <person name="Hynes M."/>
            <person name="Paoletti M."/>
            <person name="Fischer R."/>
            <person name="Miller B.L."/>
            <person name="Dyer P.S."/>
            <person name="Sachs M.S."/>
            <person name="Osmani S.A."/>
            <person name="Birren B.W."/>
        </authorList>
    </citation>
    <scope>NUCLEOTIDE SEQUENCE [LARGE SCALE GENOMIC DNA]</scope>
    <source>
        <strain>FGSC A4 / ATCC 38163 / CBS 112.46 / NRRL 194 / M139</strain>
    </source>
</reference>
<reference key="2">
    <citation type="journal article" date="2009" name="Fungal Genet. Biol.">
        <title>The 2008 update of the Aspergillus nidulans genome annotation: a community effort.</title>
        <authorList>
            <person name="Wortman J.R."/>
            <person name="Gilsenan J.M."/>
            <person name="Joardar V."/>
            <person name="Deegan J."/>
            <person name="Clutterbuck J."/>
            <person name="Andersen M.R."/>
            <person name="Archer D."/>
            <person name="Bencina M."/>
            <person name="Braus G."/>
            <person name="Coutinho P."/>
            <person name="von Dohren H."/>
            <person name="Doonan J."/>
            <person name="Driessen A.J."/>
            <person name="Durek P."/>
            <person name="Espeso E."/>
            <person name="Fekete E."/>
            <person name="Flipphi M."/>
            <person name="Estrada C.G."/>
            <person name="Geysens S."/>
            <person name="Goldman G."/>
            <person name="de Groot P.W."/>
            <person name="Hansen K."/>
            <person name="Harris S.D."/>
            <person name="Heinekamp T."/>
            <person name="Helmstaedt K."/>
            <person name="Henrissat B."/>
            <person name="Hofmann G."/>
            <person name="Homan T."/>
            <person name="Horio T."/>
            <person name="Horiuchi H."/>
            <person name="James S."/>
            <person name="Jones M."/>
            <person name="Karaffa L."/>
            <person name="Karanyi Z."/>
            <person name="Kato M."/>
            <person name="Keller N."/>
            <person name="Kelly D.E."/>
            <person name="Kiel J.A."/>
            <person name="Kim J.M."/>
            <person name="van der Klei I.J."/>
            <person name="Klis F.M."/>
            <person name="Kovalchuk A."/>
            <person name="Krasevec N."/>
            <person name="Kubicek C.P."/>
            <person name="Liu B."/>
            <person name="Maccabe A."/>
            <person name="Meyer V."/>
            <person name="Mirabito P."/>
            <person name="Miskei M."/>
            <person name="Mos M."/>
            <person name="Mullins J."/>
            <person name="Nelson D.R."/>
            <person name="Nielsen J."/>
            <person name="Oakley B.R."/>
            <person name="Osmani S.A."/>
            <person name="Pakula T."/>
            <person name="Paszewski A."/>
            <person name="Paulsen I."/>
            <person name="Pilsyk S."/>
            <person name="Pocsi I."/>
            <person name="Punt P.J."/>
            <person name="Ram A.F."/>
            <person name="Ren Q."/>
            <person name="Robellet X."/>
            <person name="Robson G."/>
            <person name="Seiboth B."/>
            <person name="van Solingen P."/>
            <person name="Specht T."/>
            <person name="Sun J."/>
            <person name="Taheri-Talesh N."/>
            <person name="Takeshita N."/>
            <person name="Ussery D."/>
            <person name="vanKuyk P.A."/>
            <person name="Visser H."/>
            <person name="van de Vondervoort P.J."/>
            <person name="de Vries R.P."/>
            <person name="Walton J."/>
            <person name="Xiang X."/>
            <person name="Xiong Y."/>
            <person name="Zeng A.P."/>
            <person name="Brandt B.W."/>
            <person name="Cornell M.J."/>
            <person name="van den Hondel C.A."/>
            <person name="Visser J."/>
            <person name="Oliver S.G."/>
            <person name="Turner G."/>
        </authorList>
    </citation>
    <scope>GENOME REANNOTATION</scope>
    <source>
        <strain>FGSC A4 / ATCC 38163 / CBS 112.46 / NRRL 194 / M139</strain>
    </source>
</reference>
<reference key="3">
    <citation type="journal article" date="2013" name="Proc. Natl. Acad. Sci. U.S.A.">
        <title>Accurate prediction of secondary metabolite gene clusters in filamentous fungi.</title>
        <authorList>
            <person name="Andersen M.R."/>
            <person name="Nielsen J.B."/>
            <person name="Klitgaard A."/>
            <person name="Petersen L.M."/>
            <person name="Zachariasen M."/>
            <person name="Hansen T.J."/>
            <person name="Blicher L.H."/>
            <person name="Gotfredsen C.H."/>
            <person name="Larsen T.O."/>
            <person name="Nielsen K.F."/>
            <person name="Mortensen U.H."/>
        </authorList>
    </citation>
    <scope>IDENTIFICATION OF THE CLUSTER</scope>
</reference>
<reference key="4">
    <citation type="journal article" date="2016" name="ACS Chem. Biol.">
        <title>New aspercryptins, lipopeptide natural products, revealed by HDAC inhibition in Aspergillus nidulans.</title>
        <authorList>
            <person name="Henke M.T."/>
            <person name="Soukup A.A."/>
            <person name="Goering A.W."/>
            <person name="McClure R.A."/>
            <person name="Thomson R.J."/>
            <person name="Keller N.P."/>
            <person name="Kelleher N.L."/>
        </authorList>
    </citation>
    <scope>FUNCTION</scope>
    <scope>INDUCTION</scope>
</reference>
<reference key="5">
    <citation type="journal article" date="2016" name="Angew. Chem. Int. Ed.">
        <title>Development of genetic dereplication strains in Aspergillus nidulans results in the discovery of aspercryptin.</title>
        <authorList>
            <person name="Chiang Y.M."/>
            <person name="Ahuja M."/>
            <person name="Oakley C.E."/>
            <person name="Entwistle R."/>
            <person name="Asokan A."/>
            <person name="Zutz C."/>
            <person name="Wang C.C."/>
            <person name="Oakley B.R."/>
        </authorList>
    </citation>
    <scope>FUNCTION</scope>
    <scope>DISRUPTION PHENOTYPE</scope>
    <scope>PATHWAY</scope>
</reference>
<comment type="function">
    <text evidence="4 5 6">Fatty acid synthase beta subunit; part of the gene cluster that mediates the biosynthesis of aspercryptins, linear lipopeptides built from six amino acids including 2 highly unusual and nonproteogenic amino acids, 2-amino-octanoic acid (2aoa) and 2-amino-dodecanol (2adol) (PubMed:23248299, PubMed:26563584, PubMed:27310134). The core structure of aspercryptins is as follows: Ser/Ala-Thr-Ile/Val-2aoa-Asn-2adol (PubMed:27310134). The first step of aspercryptin biosynthesis is the generation of the fatty acid precursors, octanoic and dodecanoic acids, by the FAS subunits atnF and atnM (PubMed:26563584, PubMed:27310134). The fatty acid precursors are likely transformed into the corresponding alpha-amino fatty acids in three steps (PubMed:26563584, PubMed:27310134). First, they are hydroxylated by the cytochrome P450 monooxygenase atnE, then oxidized to the corresponding alpha-keto acids by the NAD(P)-dependent oxidoreductase atnD, and finally converted to the alpha-amino fatty acids by the PLP-dependent aminotransferases atnH or atnJ (PubMed:26563584, PubMed:27310134). the alpha-amino fatty acids, 2-amino-octanoic and 2-amino-dodecanoic acids, are recognized, activated, and covalently tethered to the NRPS atnA by its fourth and sixth adenylation domains (PubMed:27310134). The second module of atnA is the Thr module and contains an epimerase (E) domain responsible for the epimerization of Thr to D-allo-Thr (PubMed:26563584). Additionally, despite atnA having only one epimerase domain, the first amino acid of aspercryptin A1 is D-Ser, suggesting that serine is either loaded directly as D-Ser on the first module or that the epimerase domain in the threonine module epimerizes both L-Ser and L-Thr (PubMed:27310134). After condensation of the hexapeptide of aspercryptin, the C-terminal reductase (TE) domain might be involved in the reductive release and production of the aldehyde hexapeptide (PubMed:26563584). Further reduction would generate aspercryptins (PubMed:26563584, PubMed:27310134). The variety of aspercryptins produced reflects the flexibility of the atnA NRPS, allowing incorporation of alanine instead of serine, valine for isoleucine, and a C10 fatty amino alcohol instead of the C12 version (PubMed:27310134). AtnB seems to be involved in the selectivity for Ile versus Val by the third module (PubMed:26563584). Moreover, type B, C and D aspercryptins have an additional N-terminal cichorine, acetyl and propionyl group respectively (PubMed:27310134).</text>
</comment>
<comment type="catalytic activity">
    <reaction evidence="2">
        <text>acetyl-CoA + n malonyl-CoA + 2n NADPH + 4n H(+) = a long-chain-acyl-CoA + n CoA + n CO2 + 2n NADP(+).</text>
        <dbReference type="EC" id="2.3.1.86"/>
    </reaction>
</comment>
<comment type="catalytic activity">
    <reaction evidence="2">
        <text>holo-[ACP] + acetyl-CoA = acetyl-[ACP] + CoA</text>
        <dbReference type="Rhea" id="RHEA:41788"/>
        <dbReference type="Rhea" id="RHEA-COMP:9621"/>
        <dbReference type="Rhea" id="RHEA-COMP:9685"/>
        <dbReference type="ChEBI" id="CHEBI:57287"/>
        <dbReference type="ChEBI" id="CHEBI:57288"/>
        <dbReference type="ChEBI" id="CHEBI:64479"/>
        <dbReference type="ChEBI" id="CHEBI:78446"/>
        <dbReference type="EC" id="2.3.1.38"/>
    </reaction>
</comment>
<comment type="catalytic activity">
    <reaction evidence="2">
        <text>holo-[ACP] + malonyl-CoA = malonyl-[ACP] + CoA</text>
        <dbReference type="Rhea" id="RHEA:41792"/>
        <dbReference type="Rhea" id="RHEA-COMP:9623"/>
        <dbReference type="Rhea" id="RHEA-COMP:9685"/>
        <dbReference type="ChEBI" id="CHEBI:57287"/>
        <dbReference type="ChEBI" id="CHEBI:57384"/>
        <dbReference type="ChEBI" id="CHEBI:64479"/>
        <dbReference type="ChEBI" id="CHEBI:78449"/>
        <dbReference type="EC" id="2.3.1.39"/>
    </reaction>
</comment>
<comment type="catalytic activity">
    <reaction evidence="2">
        <text>a (3R)-hydroxyacyl-[ACP] = a (2E)-enoyl-[ACP] + H2O</text>
        <dbReference type="Rhea" id="RHEA:13097"/>
        <dbReference type="Rhea" id="RHEA-COMP:9925"/>
        <dbReference type="Rhea" id="RHEA-COMP:9945"/>
        <dbReference type="ChEBI" id="CHEBI:15377"/>
        <dbReference type="ChEBI" id="CHEBI:78784"/>
        <dbReference type="ChEBI" id="CHEBI:78827"/>
        <dbReference type="EC" id="4.2.1.59"/>
    </reaction>
</comment>
<comment type="catalytic activity">
    <reaction evidence="2">
        <text>a 2,3-saturated acyl-[ACP] + NAD(+) = a (2E)-enoyl-[ACP] + NADH + H(+)</text>
        <dbReference type="Rhea" id="RHEA:10240"/>
        <dbReference type="Rhea" id="RHEA-COMP:9925"/>
        <dbReference type="Rhea" id="RHEA-COMP:9926"/>
        <dbReference type="ChEBI" id="CHEBI:15378"/>
        <dbReference type="ChEBI" id="CHEBI:57540"/>
        <dbReference type="ChEBI" id="CHEBI:57945"/>
        <dbReference type="ChEBI" id="CHEBI:78784"/>
        <dbReference type="ChEBI" id="CHEBI:78785"/>
        <dbReference type="EC" id="1.3.1.9"/>
    </reaction>
</comment>
<comment type="catalytic activity">
    <reaction evidence="2">
        <text>(9Z)-octadecenoyl-[ACP] + H2O = (9Z)-octadecenoate + holo-[ACP] + H(+)</text>
        <dbReference type="Rhea" id="RHEA:15057"/>
        <dbReference type="Rhea" id="RHEA-COMP:9685"/>
        <dbReference type="Rhea" id="RHEA-COMP:9924"/>
        <dbReference type="ChEBI" id="CHEBI:15377"/>
        <dbReference type="ChEBI" id="CHEBI:15378"/>
        <dbReference type="ChEBI" id="CHEBI:30823"/>
        <dbReference type="ChEBI" id="CHEBI:64479"/>
        <dbReference type="ChEBI" id="CHEBI:78783"/>
        <dbReference type="EC" id="3.1.2.14"/>
    </reaction>
</comment>
<comment type="pathway">
    <text evidence="5">Secondary metabolite biosynthesis.</text>
</comment>
<comment type="subunit">
    <text evidence="1">[Alpha(6)beta(6)] hexamers of two multifunctional subunits (alpha and beta).</text>
</comment>
<comment type="induction">
    <text evidence="6">Expression is positively regulated by the aspercryptin cluser-specific transcription factor atnN (PubMed:27310134).</text>
</comment>
<comment type="disruption phenotype">
    <text evidence="5">Eliminates more than 99.5% of aspercryptin production (PubMed:26563584).</text>
</comment>
<comment type="similarity">
    <text evidence="8">Belongs to the fungal fatty acid synthetase subunit beta family.</text>
</comment>
<feature type="chain" id="PRO_0000444130" description="Fatty acid synthase beta subunit aflB">
    <location>
        <begin position="1"/>
        <end position="2111"/>
    </location>
</feature>
<feature type="domain" description="MaoC-like" evidence="3">
    <location>
        <begin position="1606"/>
        <end position="1708"/>
    </location>
</feature>
<feature type="region of interest" description="Acetyltransferase (AT) domain" evidence="2">
    <location>
        <begin position="200"/>
        <end position="565"/>
    </location>
</feature>
<feature type="region of interest" description="Enoyl reductase (ER) domain" evidence="2">
    <location>
        <begin position="618"/>
        <end position="863"/>
    </location>
</feature>
<feature type="region of interest" description="Dehydratase (DH) domain" evidence="2">
    <location>
        <begin position="1195"/>
        <end position="1688"/>
    </location>
</feature>
<feature type="region of interest" description="Malonyl/palmitoyl transferase (MT/PT) domain" evidence="2 3">
    <location>
        <begin position="1727"/>
        <end position="2091"/>
    </location>
</feature>
<organism>
    <name type="scientific">Emericella nidulans (strain FGSC A4 / ATCC 38163 / CBS 112.46 / NRRL 194 / M139)</name>
    <name type="common">Aspergillus nidulans</name>
    <dbReference type="NCBI Taxonomy" id="227321"/>
    <lineage>
        <taxon>Eukaryota</taxon>
        <taxon>Fungi</taxon>
        <taxon>Dikarya</taxon>
        <taxon>Ascomycota</taxon>
        <taxon>Pezizomycotina</taxon>
        <taxon>Eurotiomycetes</taxon>
        <taxon>Eurotiomycetidae</taxon>
        <taxon>Eurotiales</taxon>
        <taxon>Aspergillaceae</taxon>
        <taxon>Aspergillus</taxon>
        <taxon>Aspergillus subgen. Nidulantes</taxon>
    </lineage>
</organism>
<protein>
    <recommendedName>
        <fullName evidence="7">Fatty acid synthase beta subunit aflB</fullName>
        <ecNumber evidence="9">2.3.1.86</ecNumber>
    </recommendedName>
    <alternativeName>
        <fullName evidence="7">Aspercryptin biosynthesis cluster protein M</fullName>
    </alternativeName>
    <domain>
        <recommendedName>
            <fullName evidence="2">3-hydroxyacyl-[acyl-carrier-protein] dehydratase</fullName>
            <ecNumber evidence="2">4.2.1.59</ecNumber>
        </recommendedName>
    </domain>
    <domain>
        <recommendedName>
            <fullName evidence="2">Enoyl-[acyl-carrier-protein] reductase [NADH]</fullName>
            <ecNumber evidence="2">1.3.1.9</ecNumber>
        </recommendedName>
    </domain>
    <domain>
        <recommendedName>
            <fullName evidence="2">[Acyl-carrier-protein] acetyltransferase</fullName>
            <ecNumber evidence="2">2.3.1.38</ecNumber>
        </recommendedName>
    </domain>
    <domain>
        <recommendedName>
            <fullName evidence="2">[Acyl-carrier-protein] malonyltransferase</fullName>
            <ecNumber evidence="2">2.3.1.39</ecNumber>
        </recommendedName>
    </domain>
    <domain>
        <recommendedName>
            <fullName evidence="2">S-acyl fatty acid synthase thioesterase</fullName>
            <ecNumber evidence="2">3.1.2.14</ecNumber>
        </recommendedName>
    </domain>
</protein>
<evidence type="ECO:0000250" key="1">
    <source>
        <dbReference type="UniProtKB" id="P19097"/>
    </source>
</evidence>
<evidence type="ECO:0000250" key="2">
    <source>
        <dbReference type="UniProtKB" id="Q8TGA1"/>
    </source>
</evidence>
<evidence type="ECO:0000255" key="3"/>
<evidence type="ECO:0000269" key="4">
    <source>
    </source>
</evidence>
<evidence type="ECO:0000269" key="5">
    <source>
    </source>
</evidence>
<evidence type="ECO:0000269" key="6">
    <source>
    </source>
</evidence>
<evidence type="ECO:0000303" key="7">
    <source>
    </source>
</evidence>
<evidence type="ECO:0000305" key="8"/>
<evidence type="ECO:0000305" key="9">
    <source>
    </source>
</evidence>
<name>ATNM_EMENI</name>
<keyword id="KW-0378">Hydrolase</keyword>
<keyword id="KW-0456">Lyase</keyword>
<keyword id="KW-0511">Multifunctional enzyme</keyword>
<keyword id="KW-0520">NAD</keyword>
<keyword id="KW-0521">NADP</keyword>
<keyword id="KW-0560">Oxidoreductase</keyword>
<keyword id="KW-1185">Reference proteome</keyword>
<keyword id="KW-0808">Transferase</keyword>
<gene>
    <name evidence="7" type="primary">atnM</name>
    <name type="ORF">ANIA_07873</name>
</gene>
<accession>Q5AV07</accession>
<accession>A0A1U8QFM2</accession>
<accession>C8V3X8</accession>